<reference key="1">
    <citation type="submission" date="2007-04" db="EMBL/GenBank/DDBJ databases">
        <title>Complete sequence of chromosome of Rhodobacter sphaeroides ATCC 17025.</title>
        <authorList>
            <consortium name="US DOE Joint Genome Institute"/>
            <person name="Copeland A."/>
            <person name="Lucas S."/>
            <person name="Lapidus A."/>
            <person name="Barry K."/>
            <person name="Detter J.C."/>
            <person name="Glavina del Rio T."/>
            <person name="Hammon N."/>
            <person name="Israni S."/>
            <person name="Dalin E."/>
            <person name="Tice H."/>
            <person name="Pitluck S."/>
            <person name="Chertkov O."/>
            <person name="Brettin T."/>
            <person name="Bruce D."/>
            <person name="Han C."/>
            <person name="Schmutz J."/>
            <person name="Larimer F."/>
            <person name="Land M."/>
            <person name="Hauser L."/>
            <person name="Kyrpides N."/>
            <person name="Kim E."/>
            <person name="Richardson P."/>
            <person name="Mackenzie C."/>
            <person name="Choudhary M."/>
            <person name="Donohue T.J."/>
            <person name="Kaplan S."/>
        </authorList>
    </citation>
    <scope>NUCLEOTIDE SEQUENCE [LARGE SCALE GENOMIC DNA]</scope>
    <source>
        <strain>ATCC 17025 / ATH 2.4.3</strain>
    </source>
</reference>
<comment type="function">
    <text evidence="1">May play a role in DNA repair. It seems to be involved in an RecBC-independent recombinational process of DNA repair. It may act with RecF and RecO.</text>
</comment>
<comment type="similarity">
    <text evidence="1">Belongs to the RecR family.</text>
</comment>
<gene>
    <name evidence="1" type="primary">recR</name>
    <name type="ordered locus">Rsph17025_0519</name>
</gene>
<organism>
    <name type="scientific">Cereibacter sphaeroides (strain ATCC 17025 / ATH 2.4.3)</name>
    <name type="common">Rhodobacter sphaeroides</name>
    <dbReference type="NCBI Taxonomy" id="349102"/>
    <lineage>
        <taxon>Bacteria</taxon>
        <taxon>Pseudomonadati</taxon>
        <taxon>Pseudomonadota</taxon>
        <taxon>Alphaproteobacteria</taxon>
        <taxon>Rhodobacterales</taxon>
        <taxon>Paracoccaceae</taxon>
        <taxon>Cereibacter</taxon>
    </lineage>
</organism>
<sequence>MAEAPGDIERLIELMARLPGLGPRSARRAVLVMLKKRGAVMAPLAQAMAEVAATARDCARCGNITSADLCDICRDDRRATGELCVVEDVADLWALERAGVFRGRYHVLGGVLSALDSVGPDELRIPRLAERVRDEGISEVILALNATVDGQTTAHYIADVLEPSGVQVTSLAQGVPIGGELDYLDDGTIGAALRARRRF</sequence>
<keyword id="KW-0227">DNA damage</keyword>
<keyword id="KW-0233">DNA recombination</keyword>
<keyword id="KW-0234">DNA repair</keyword>
<keyword id="KW-0479">Metal-binding</keyword>
<keyword id="KW-0862">Zinc</keyword>
<keyword id="KW-0863">Zinc-finger</keyword>
<feature type="chain" id="PRO_1000001597" description="Recombination protein RecR">
    <location>
        <begin position="1"/>
        <end position="199"/>
    </location>
</feature>
<feature type="domain" description="Toprim" evidence="1">
    <location>
        <begin position="81"/>
        <end position="176"/>
    </location>
</feature>
<feature type="zinc finger region" description="C4-type" evidence="1">
    <location>
        <begin position="58"/>
        <end position="73"/>
    </location>
</feature>
<accession>A4WPW1</accession>
<dbReference type="EMBL" id="CP000661">
    <property type="protein sequence ID" value="ABP69425.1"/>
    <property type="molecule type" value="Genomic_DNA"/>
</dbReference>
<dbReference type="SMR" id="A4WPW1"/>
<dbReference type="STRING" id="349102.Rsph17025_0519"/>
<dbReference type="KEGG" id="rsq:Rsph17025_0519"/>
<dbReference type="eggNOG" id="COG0353">
    <property type="taxonomic scope" value="Bacteria"/>
</dbReference>
<dbReference type="HOGENOM" id="CLU_060739_1_1_5"/>
<dbReference type="BioCyc" id="RSPH349102:G1G8M-535-MONOMER"/>
<dbReference type="GO" id="GO:0003677">
    <property type="term" value="F:DNA binding"/>
    <property type="evidence" value="ECO:0007669"/>
    <property type="project" value="UniProtKB-UniRule"/>
</dbReference>
<dbReference type="GO" id="GO:0008270">
    <property type="term" value="F:zinc ion binding"/>
    <property type="evidence" value="ECO:0007669"/>
    <property type="project" value="UniProtKB-KW"/>
</dbReference>
<dbReference type="GO" id="GO:0006310">
    <property type="term" value="P:DNA recombination"/>
    <property type="evidence" value="ECO:0007669"/>
    <property type="project" value="UniProtKB-UniRule"/>
</dbReference>
<dbReference type="GO" id="GO:0006281">
    <property type="term" value="P:DNA repair"/>
    <property type="evidence" value="ECO:0007669"/>
    <property type="project" value="UniProtKB-UniRule"/>
</dbReference>
<dbReference type="CDD" id="cd01025">
    <property type="entry name" value="TOPRIM_recR"/>
    <property type="match status" value="1"/>
</dbReference>
<dbReference type="Gene3D" id="3.40.1360.10">
    <property type="match status" value="1"/>
</dbReference>
<dbReference type="Gene3D" id="1.10.8.420">
    <property type="entry name" value="RecR Domain 1"/>
    <property type="match status" value="1"/>
</dbReference>
<dbReference type="HAMAP" id="MF_00017">
    <property type="entry name" value="RecR"/>
    <property type="match status" value="1"/>
</dbReference>
<dbReference type="InterPro" id="IPR000093">
    <property type="entry name" value="DNA_Rcmb_RecR"/>
</dbReference>
<dbReference type="InterPro" id="IPR023627">
    <property type="entry name" value="Rcmb_RecR"/>
</dbReference>
<dbReference type="InterPro" id="IPR015967">
    <property type="entry name" value="Rcmb_RecR_Znf"/>
</dbReference>
<dbReference type="InterPro" id="IPR006171">
    <property type="entry name" value="TOPRIM_dom"/>
</dbReference>
<dbReference type="InterPro" id="IPR034137">
    <property type="entry name" value="TOPRIM_RecR"/>
</dbReference>
<dbReference type="NCBIfam" id="TIGR00615">
    <property type="entry name" value="recR"/>
    <property type="match status" value="1"/>
</dbReference>
<dbReference type="PANTHER" id="PTHR30446">
    <property type="entry name" value="RECOMBINATION PROTEIN RECR"/>
    <property type="match status" value="1"/>
</dbReference>
<dbReference type="PANTHER" id="PTHR30446:SF0">
    <property type="entry name" value="RECOMBINATION PROTEIN RECR"/>
    <property type="match status" value="1"/>
</dbReference>
<dbReference type="Pfam" id="PF21175">
    <property type="entry name" value="RecR_C"/>
    <property type="match status" value="1"/>
</dbReference>
<dbReference type="Pfam" id="PF21176">
    <property type="entry name" value="RecR_HhH"/>
    <property type="match status" value="1"/>
</dbReference>
<dbReference type="Pfam" id="PF02132">
    <property type="entry name" value="RecR_ZnF"/>
    <property type="match status" value="1"/>
</dbReference>
<dbReference type="Pfam" id="PF13662">
    <property type="entry name" value="Toprim_4"/>
    <property type="match status" value="1"/>
</dbReference>
<dbReference type="SMART" id="SM00493">
    <property type="entry name" value="TOPRIM"/>
    <property type="match status" value="1"/>
</dbReference>
<dbReference type="SUPFAM" id="SSF111304">
    <property type="entry name" value="Recombination protein RecR"/>
    <property type="match status" value="1"/>
</dbReference>
<dbReference type="PROSITE" id="PS50880">
    <property type="entry name" value="TOPRIM"/>
    <property type="match status" value="1"/>
</dbReference>
<proteinExistence type="inferred from homology"/>
<name>RECR_CERS5</name>
<protein>
    <recommendedName>
        <fullName evidence="1">Recombination protein RecR</fullName>
    </recommendedName>
</protein>
<evidence type="ECO:0000255" key="1">
    <source>
        <dbReference type="HAMAP-Rule" id="MF_00017"/>
    </source>
</evidence>